<organism>
    <name type="scientific">Shewanella pealeana (strain ATCC 700345 / ANG-SQ1)</name>
    <dbReference type="NCBI Taxonomy" id="398579"/>
    <lineage>
        <taxon>Bacteria</taxon>
        <taxon>Pseudomonadati</taxon>
        <taxon>Pseudomonadota</taxon>
        <taxon>Gammaproteobacteria</taxon>
        <taxon>Alteromonadales</taxon>
        <taxon>Shewanellaceae</taxon>
        <taxon>Shewanella</taxon>
    </lineage>
</organism>
<name>RIBA_SHEPA</name>
<protein>
    <recommendedName>
        <fullName evidence="1">GTP cyclohydrolase-2</fullName>
        <ecNumber evidence="1">3.5.4.25</ecNumber>
    </recommendedName>
    <alternativeName>
        <fullName evidence="1">GTP cyclohydrolase II</fullName>
    </alternativeName>
</protein>
<sequence length="209" mass="23641">MSIKYIASSKLPTPWGVFEMHGFEDSETGKEHVALTFGTFTPDAPILGRIHSECLTGDALFSLRCDCGFQLQTAMQNIAEEGQGFILYLRQEGRGIGLLNKIRAYELQDQGANTVEANERLGFEADMRKYDMIIPMMEKIGVDKVRLMTNNPRKVKAMQSFGLEVVERVPLQVGKNRYNEGYLKTKSTQLGHMMSEHHFTETDPEVDKD</sequence>
<keyword id="KW-0342">GTP-binding</keyword>
<keyword id="KW-0378">Hydrolase</keyword>
<keyword id="KW-0479">Metal-binding</keyword>
<keyword id="KW-0547">Nucleotide-binding</keyword>
<keyword id="KW-1185">Reference proteome</keyword>
<keyword id="KW-0686">Riboflavin biosynthesis</keyword>
<keyword id="KW-0862">Zinc</keyword>
<gene>
    <name evidence="1" type="primary">ribA</name>
    <name type="ordered locus">Spea_2616</name>
</gene>
<reference key="1">
    <citation type="submission" date="2007-10" db="EMBL/GenBank/DDBJ databases">
        <title>Complete sequence of Shewanella pealeana ATCC 700345.</title>
        <authorList>
            <consortium name="US DOE Joint Genome Institute"/>
            <person name="Copeland A."/>
            <person name="Lucas S."/>
            <person name="Lapidus A."/>
            <person name="Barry K."/>
            <person name="Glavina del Rio T."/>
            <person name="Dalin E."/>
            <person name="Tice H."/>
            <person name="Pitluck S."/>
            <person name="Chertkov O."/>
            <person name="Brettin T."/>
            <person name="Bruce D."/>
            <person name="Detter J.C."/>
            <person name="Han C."/>
            <person name="Schmutz J."/>
            <person name="Larimer F."/>
            <person name="Land M."/>
            <person name="Hauser L."/>
            <person name="Kyrpides N."/>
            <person name="Kim E."/>
            <person name="Zhao J.-S.Z."/>
            <person name="Manno D."/>
            <person name="Hawari J."/>
            <person name="Richardson P."/>
        </authorList>
    </citation>
    <scope>NUCLEOTIDE SEQUENCE [LARGE SCALE GENOMIC DNA]</scope>
    <source>
        <strain>ATCC 700345 / ANG-SQ1</strain>
    </source>
</reference>
<accession>A8H5U9</accession>
<evidence type="ECO:0000255" key="1">
    <source>
        <dbReference type="HAMAP-Rule" id="MF_00179"/>
    </source>
</evidence>
<comment type="function">
    <text evidence="1">Catalyzes the conversion of GTP to 2,5-diamino-6-ribosylamino-4(3H)-pyrimidinone 5'-phosphate (DARP), formate and pyrophosphate.</text>
</comment>
<comment type="catalytic activity">
    <reaction evidence="1">
        <text>GTP + 4 H2O = 2,5-diamino-6-hydroxy-4-(5-phosphoribosylamino)-pyrimidine + formate + 2 phosphate + 3 H(+)</text>
        <dbReference type="Rhea" id="RHEA:23704"/>
        <dbReference type="ChEBI" id="CHEBI:15377"/>
        <dbReference type="ChEBI" id="CHEBI:15378"/>
        <dbReference type="ChEBI" id="CHEBI:15740"/>
        <dbReference type="ChEBI" id="CHEBI:37565"/>
        <dbReference type="ChEBI" id="CHEBI:43474"/>
        <dbReference type="ChEBI" id="CHEBI:58614"/>
        <dbReference type="EC" id="3.5.4.25"/>
    </reaction>
</comment>
<comment type="cofactor">
    <cofactor evidence="1">
        <name>Zn(2+)</name>
        <dbReference type="ChEBI" id="CHEBI:29105"/>
    </cofactor>
    <text evidence="1">Binds 1 zinc ion per subunit.</text>
</comment>
<comment type="pathway">
    <text evidence="1">Cofactor biosynthesis; riboflavin biosynthesis; 5-amino-6-(D-ribitylamino)uracil from GTP: step 1/4.</text>
</comment>
<comment type="similarity">
    <text evidence="1">Belongs to the GTP cyclohydrolase II family.</text>
</comment>
<proteinExistence type="inferred from homology"/>
<feature type="chain" id="PRO_1000077262" description="GTP cyclohydrolase-2">
    <location>
        <begin position="1"/>
        <end position="209"/>
    </location>
</feature>
<feature type="active site" description="Proton acceptor" evidence="1">
    <location>
        <position position="126"/>
    </location>
</feature>
<feature type="active site" description="Nucleophile" evidence="1">
    <location>
        <position position="128"/>
    </location>
</feature>
<feature type="binding site" evidence="1">
    <location>
        <begin position="49"/>
        <end position="53"/>
    </location>
    <ligand>
        <name>GTP</name>
        <dbReference type="ChEBI" id="CHEBI:37565"/>
    </ligand>
</feature>
<feature type="binding site" evidence="1">
    <location>
        <position position="54"/>
    </location>
    <ligand>
        <name>Zn(2+)</name>
        <dbReference type="ChEBI" id="CHEBI:29105"/>
        <note>catalytic</note>
    </ligand>
</feature>
<feature type="binding site" evidence="1">
    <location>
        <position position="65"/>
    </location>
    <ligand>
        <name>Zn(2+)</name>
        <dbReference type="ChEBI" id="CHEBI:29105"/>
        <note>catalytic</note>
    </ligand>
</feature>
<feature type="binding site" evidence="1">
    <location>
        <position position="67"/>
    </location>
    <ligand>
        <name>Zn(2+)</name>
        <dbReference type="ChEBI" id="CHEBI:29105"/>
        <note>catalytic</note>
    </ligand>
</feature>
<feature type="binding site" evidence="1">
    <location>
        <position position="70"/>
    </location>
    <ligand>
        <name>GTP</name>
        <dbReference type="ChEBI" id="CHEBI:37565"/>
    </ligand>
</feature>
<feature type="binding site" evidence="1">
    <location>
        <begin position="92"/>
        <end position="94"/>
    </location>
    <ligand>
        <name>GTP</name>
        <dbReference type="ChEBI" id="CHEBI:37565"/>
    </ligand>
</feature>
<feature type="binding site" evidence="1">
    <location>
        <position position="114"/>
    </location>
    <ligand>
        <name>GTP</name>
        <dbReference type="ChEBI" id="CHEBI:37565"/>
    </ligand>
</feature>
<feature type="binding site" evidence="1">
    <location>
        <position position="149"/>
    </location>
    <ligand>
        <name>GTP</name>
        <dbReference type="ChEBI" id="CHEBI:37565"/>
    </ligand>
</feature>
<feature type="binding site" evidence="1">
    <location>
        <position position="154"/>
    </location>
    <ligand>
        <name>GTP</name>
        <dbReference type="ChEBI" id="CHEBI:37565"/>
    </ligand>
</feature>
<dbReference type="EC" id="3.5.4.25" evidence="1"/>
<dbReference type="EMBL" id="CP000851">
    <property type="protein sequence ID" value="ABV87936.1"/>
    <property type="molecule type" value="Genomic_DNA"/>
</dbReference>
<dbReference type="RefSeq" id="WP_012155842.1">
    <property type="nucleotide sequence ID" value="NC_009901.1"/>
</dbReference>
<dbReference type="SMR" id="A8H5U9"/>
<dbReference type="STRING" id="398579.Spea_2616"/>
<dbReference type="KEGG" id="spl:Spea_2616"/>
<dbReference type="eggNOG" id="COG0807">
    <property type="taxonomic scope" value="Bacteria"/>
</dbReference>
<dbReference type="HOGENOM" id="CLU_020273_2_1_6"/>
<dbReference type="OrthoDB" id="9793111at2"/>
<dbReference type="UniPathway" id="UPA00275">
    <property type="reaction ID" value="UER00400"/>
</dbReference>
<dbReference type="Proteomes" id="UP000002608">
    <property type="component" value="Chromosome"/>
</dbReference>
<dbReference type="GO" id="GO:0005829">
    <property type="term" value="C:cytosol"/>
    <property type="evidence" value="ECO:0007669"/>
    <property type="project" value="TreeGrafter"/>
</dbReference>
<dbReference type="GO" id="GO:0005525">
    <property type="term" value="F:GTP binding"/>
    <property type="evidence" value="ECO:0007669"/>
    <property type="project" value="UniProtKB-KW"/>
</dbReference>
<dbReference type="GO" id="GO:0003935">
    <property type="term" value="F:GTP cyclohydrolase II activity"/>
    <property type="evidence" value="ECO:0007669"/>
    <property type="project" value="UniProtKB-UniRule"/>
</dbReference>
<dbReference type="GO" id="GO:0008270">
    <property type="term" value="F:zinc ion binding"/>
    <property type="evidence" value="ECO:0007669"/>
    <property type="project" value="UniProtKB-UniRule"/>
</dbReference>
<dbReference type="GO" id="GO:0009231">
    <property type="term" value="P:riboflavin biosynthetic process"/>
    <property type="evidence" value="ECO:0007669"/>
    <property type="project" value="UniProtKB-UniRule"/>
</dbReference>
<dbReference type="CDD" id="cd00641">
    <property type="entry name" value="GTP_cyclohydro2"/>
    <property type="match status" value="1"/>
</dbReference>
<dbReference type="FunFam" id="3.40.50.10990:FF:000002">
    <property type="entry name" value="GTP cyclohydrolase-2"/>
    <property type="match status" value="1"/>
</dbReference>
<dbReference type="Gene3D" id="3.40.50.10990">
    <property type="entry name" value="GTP cyclohydrolase II"/>
    <property type="match status" value="1"/>
</dbReference>
<dbReference type="HAMAP" id="MF_00179">
    <property type="entry name" value="RibA"/>
    <property type="match status" value="1"/>
</dbReference>
<dbReference type="InterPro" id="IPR032677">
    <property type="entry name" value="GTP_cyclohydro_II"/>
</dbReference>
<dbReference type="InterPro" id="IPR000926">
    <property type="entry name" value="RibA"/>
</dbReference>
<dbReference type="InterPro" id="IPR036144">
    <property type="entry name" value="RibA-like_sf"/>
</dbReference>
<dbReference type="NCBIfam" id="NF001591">
    <property type="entry name" value="PRK00393.1"/>
    <property type="match status" value="1"/>
</dbReference>
<dbReference type="NCBIfam" id="TIGR00505">
    <property type="entry name" value="ribA"/>
    <property type="match status" value="1"/>
</dbReference>
<dbReference type="PANTHER" id="PTHR21327:SF18">
    <property type="entry name" value="3,4-DIHYDROXY-2-BUTANONE 4-PHOSPHATE SYNTHASE"/>
    <property type="match status" value="1"/>
</dbReference>
<dbReference type="PANTHER" id="PTHR21327">
    <property type="entry name" value="GTP CYCLOHYDROLASE II-RELATED"/>
    <property type="match status" value="1"/>
</dbReference>
<dbReference type="Pfam" id="PF00925">
    <property type="entry name" value="GTP_cyclohydro2"/>
    <property type="match status" value="1"/>
</dbReference>
<dbReference type="SUPFAM" id="SSF142695">
    <property type="entry name" value="RibA-like"/>
    <property type="match status" value="1"/>
</dbReference>